<name>Y1976_SACS2</name>
<proteinExistence type="inferred from homology"/>
<protein>
    <recommendedName>
        <fullName>UPF0145 protein SSO1976</fullName>
    </recommendedName>
</protein>
<accession>Q97WY4</accession>
<evidence type="ECO:0000305" key="1"/>
<keyword id="KW-1185">Reference proteome</keyword>
<dbReference type="EMBL" id="AE006641">
    <property type="protein sequence ID" value="AAK42167.1"/>
    <property type="molecule type" value="Genomic_DNA"/>
</dbReference>
<dbReference type="PIR" id="H90363">
    <property type="entry name" value="H90363"/>
</dbReference>
<dbReference type="RefSeq" id="WP_009989373.1">
    <property type="nucleotide sequence ID" value="NC_002754.1"/>
</dbReference>
<dbReference type="SMR" id="Q97WY4"/>
<dbReference type="STRING" id="273057.SSO1976"/>
<dbReference type="PaxDb" id="273057-SSO1976"/>
<dbReference type="EnsemblBacteria" id="AAK42167">
    <property type="protein sequence ID" value="AAK42167"/>
    <property type="gene ID" value="SSO1976"/>
</dbReference>
<dbReference type="KEGG" id="sso:SSO1976"/>
<dbReference type="PATRIC" id="fig|273057.12.peg.2053"/>
<dbReference type="eggNOG" id="arCOG02287">
    <property type="taxonomic scope" value="Archaea"/>
</dbReference>
<dbReference type="HOGENOM" id="CLU_117144_1_1_2"/>
<dbReference type="InParanoid" id="Q97WY4"/>
<dbReference type="PhylomeDB" id="Q97WY4"/>
<dbReference type="Proteomes" id="UP000001974">
    <property type="component" value="Chromosome"/>
</dbReference>
<dbReference type="Gene3D" id="3.30.110.70">
    <property type="entry name" value="Hypothetical protein apc22750. Chain B"/>
    <property type="match status" value="1"/>
</dbReference>
<dbReference type="HAMAP" id="MF_00338">
    <property type="entry name" value="UPF0145"/>
    <property type="match status" value="1"/>
</dbReference>
<dbReference type="InterPro" id="IPR035439">
    <property type="entry name" value="UPF0145_dom_sf"/>
</dbReference>
<dbReference type="InterPro" id="IPR002765">
    <property type="entry name" value="UPF0145_YbjQ-like"/>
</dbReference>
<dbReference type="PANTHER" id="PTHR34068:SF2">
    <property type="entry name" value="UPF0145 PROTEIN SCO3412"/>
    <property type="match status" value="1"/>
</dbReference>
<dbReference type="PANTHER" id="PTHR34068">
    <property type="entry name" value="UPF0145 PROTEIN YBJQ"/>
    <property type="match status" value="1"/>
</dbReference>
<dbReference type="Pfam" id="PF01906">
    <property type="entry name" value="YbjQ_1"/>
    <property type="match status" value="1"/>
</dbReference>
<dbReference type="SUPFAM" id="SSF117782">
    <property type="entry name" value="YbjQ-like"/>
    <property type="match status" value="1"/>
</dbReference>
<sequence length="114" mass="12255">MSYKEGDVLVTNGEQSPGYKIVEIKGLVVGITVRSRGLGKNIIASLRSLLGGEIKEYVELAEQARLQALQRMVDNAKALGANAVVNVRFDSNELSEAMDEIIAYGTAVVVEKSS</sequence>
<comment type="similarity">
    <text evidence="1">Belongs to the UPF0145 family.</text>
</comment>
<organism>
    <name type="scientific">Saccharolobus solfataricus (strain ATCC 35092 / DSM 1617 / JCM 11322 / P2)</name>
    <name type="common">Sulfolobus solfataricus</name>
    <dbReference type="NCBI Taxonomy" id="273057"/>
    <lineage>
        <taxon>Archaea</taxon>
        <taxon>Thermoproteota</taxon>
        <taxon>Thermoprotei</taxon>
        <taxon>Sulfolobales</taxon>
        <taxon>Sulfolobaceae</taxon>
        <taxon>Saccharolobus</taxon>
    </lineage>
</organism>
<gene>
    <name type="ordered locus">SSO1976</name>
</gene>
<reference key="1">
    <citation type="journal article" date="2001" name="Proc. Natl. Acad. Sci. U.S.A.">
        <title>The complete genome of the crenarchaeon Sulfolobus solfataricus P2.</title>
        <authorList>
            <person name="She Q."/>
            <person name="Singh R.K."/>
            <person name="Confalonieri F."/>
            <person name="Zivanovic Y."/>
            <person name="Allard G."/>
            <person name="Awayez M.J."/>
            <person name="Chan-Weiher C.C.-Y."/>
            <person name="Clausen I.G."/>
            <person name="Curtis B.A."/>
            <person name="De Moors A."/>
            <person name="Erauso G."/>
            <person name="Fletcher C."/>
            <person name="Gordon P.M.K."/>
            <person name="Heikamp-de Jong I."/>
            <person name="Jeffries A.C."/>
            <person name="Kozera C.J."/>
            <person name="Medina N."/>
            <person name="Peng X."/>
            <person name="Thi-Ngoc H.P."/>
            <person name="Redder P."/>
            <person name="Schenk M.E."/>
            <person name="Theriault C."/>
            <person name="Tolstrup N."/>
            <person name="Charlebois R.L."/>
            <person name="Doolittle W.F."/>
            <person name="Duguet M."/>
            <person name="Gaasterland T."/>
            <person name="Garrett R.A."/>
            <person name="Ragan M.A."/>
            <person name="Sensen C.W."/>
            <person name="Van der Oost J."/>
        </authorList>
    </citation>
    <scope>NUCLEOTIDE SEQUENCE [LARGE SCALE GENOMIC DNA]</scope>
    <source>
        <strain>ATCC 35092 / DSM 1617 / JCM 11322 / P2</strain>
    </source>
</reference>
<feature type="chain" id="PRO_0000138503" description="UPF0145 protein SSO1976">
    <location>
        <begin position="1"/>
        <end position="114"/>
    </location>
</feature>